<dbReference type="EMBL" id="DQ465345">
    <property type="protein sequence ID" value="ABE98261.1"/>
    <property type="molecule type" value="mRNA"/>
</dbReference>
<dbReference type="EMBL" id="EF613115">
    <property type="protein sequence ID" value="ABU94955.1"/>
    <property type="molecule type" value="Genomic_DNA"/>
</dbReference>
<dbReference type="SMR" id="Q0GY46"/>
<dbReference type="GO" id="GO:0005576">
    <property type="term" value="C:extracellular region"/>
    <property type="evidence" value="ECO:0007669"/>
    <property type="project" value="UniProtKB-SubCell"/>
</dbReference>
<dbReference type="GO" id="GO:0015459">
    <property type="term" value="F:potassium channel regulator activity"/>
    <property type="evidence" value="ECO:0007669"/>
    <property type="project" value="UniProtKB-KW"/>
</dbReference>
<dbReference type="GO" id="GO:0090729">
    <property type="term" value="F:toxin activity"/>
    <property type="evidence" value="ECO:0007669"/>
    <property type="project" value="UniProtKB-KW"/>
</dbReference>
<dbReference type="InterPro" id="IPR029237">
    <property type="entry name" value="Long_scorpion_toxin_alpha/beta"/>
</dbReference>
<dbReference type="Pfam" id="PF14866">
    <property type="entry name" value="Scorpion_toxin_alpha-beta"/>
    <property type="match status" value="1"/>
</dbReference>
<dbReference type="PROSITE" id="PS51862">
    <property type="entry name" value="BSPN_CSAB"/>
    <property type="match status" value="1"/>
</dbReference>
<reference key="1">
    <citation type="journal article" date="2007" name="Peptides">
        <title>Wide phylogenetic distribution of scorpine and long-chain beta-KTx-like peptides in scorpion venoms: identification of 'orphan' components.</title>
        <authorList>
            <person name="Diego-Garcia E."/>
            <person name="Schwartz E.F."/>
            <person name="D'Suze G."/>
            <person name="Gonzalez S.A."/>
            <person name="Batista C.V."/>
            <person name="Garcia B.I."/>
            <person name="Rodriguez de la Vega R.C."/>
            <person name="Possani L.D."/>
        </authorList>
    </citation>
    <scope>NUCLEOTIDE SEQUENCE [MRNA]</scope>
    <source>
        <tissue>Venom gland</tissue>
    </source>
</reference>
<reference key="2">
    <citation type="submission" date="2007-05" db="EMBL/GenBank/DDBJ databases">
        <authorList>
            <person name="Diego-Garcia E."/>
            <person name="Schwartz E.F."/>
            <person name="Rodriguez de la Vega R.C."/>
            <person name="Possani L.D."/>
        </authorList>
    </citation>
    <scope>NUCLEOTIDE SEQUENCE [GENOMIC DNA] OF 1-44</scope>
</reference>
<reference key="3">
    <citation type="journal article" date="2010" name="Biochim. Biophys. Acta">
        <title>MeuTXKbeta1, a scorpion venom-derived two-domain potassium channel toxin-like peptide with cytolytic activity.</title>
        <authorList>
            <person name="Zhu S."/>
            <person name="Gao B."/>
            <person name="Aumelas A."/>
            <person name="Del Carmen Rodriguez M."/>
            <person name="Lanz-Mendoza H."/>
            <person name="Peigneur S."/>
            <person name="Diego-Garcia E."/>
            <person name="Martin-Eauclaire M.-F."/>
            <person name="Tytgat J."/>
            <person name="Possani L.D."/>
        </authorList>
    </citation>
    <scope>SEQUENCE REVISION TO 64; 76 AND 78</scope>
</reference>
<keyword id="KW-1015">Disulfide bond</keyword>
<keyword id="KW-0872">Ion channel impairing toxin</keyword>
<keyword id="KW-0528">Neurotoxin</keyword>
<keyword id="KW-0632">Potassium channel impairing toxin</keyword>
<keyword id="KW-0964">Secreted</keyword>
<keyword id="KW-0732">Signal</keyword>
<keyword id="KW-0800">Toxin</keyword>
<name>KBX1_TITTR</name>
<comment type="function">
    <text evidence="1">Inhibits voltage-gated potassium channel.</text>
</comment>
<comment type="subcellular location">
    <subcellularLocation>
        <location evidence="6">Secreted</location>
    </subcellularLocation>
</comment>
<comment type="tissue specificity">
    <text evidence="6">Expressed by the venom gland.</text>
</comment>
<comment type="similarity">
    <text evidence="5">Belongs to the long chain scorpion toxin family. Class 1 subfamily.</text>
</comment>
<proteinExistence type="inferred from homology"/>
<organism>
    <name type="scientific">Tityus trivittatus</name>
    <name type="common">Argentinean scorpion</name>
    <dbReference type="NCBI Taxonomy" id="369776"/>
    <lineage>
        <taxon>Eukaryota</taxon>
        <taxon>Metazoa</taxon>
        <taxon>Ecdysozoa</taxon>
        <taxon>Arthropoda</taxon>
        <taxon>Chelicerata</taxon>
        <taxon>Arachnida</taxon>
        <taxon>Scorpiones</taxon>
        <taxon>Buthida</taxon>
        <taxon>Buthoidea</taxon>
        <taxon>Buthidae</taxon>
        <taxon>Tityus</taxon>
    </lineage>
</organism>
<feature type="signal peptide" evidence="2">
    <location>
        <begin position="1"/>
        <end position="19"/>
    </location>
</feature>
<feature type="propeptide" id="PRO_0000274678" evidence="1">
    <location>
        <begin position="20"/>
        <end position="27"/>
    </location>
</feature>
<feature type="chain" id="PRO_0000274679" description="Potassium channel toxin Ttr-beta-KTx" evidence="1">
    <location>
        <begin position="28"/>
        <end position="87"/>
    </location>
</feature>
<feature type="domain" description="BetaSPN-type CS-alpha/beta" evidence="3">
    <location>
        <begin position="53"/>
        <end position="87"/>
    </location>
</feature>
<feature type="disulfide bond" evidence="3">
    <location>
        <begin position="56"/>
        <end position="77"/>
    </location>
</feature>
<feature type="disulfide bond" evidence="3">
    <location>
        <begin position="63"/>
        <end position="82"/>
    </location>
</feature>
<feature type="disulfide bond" evidence="3">
    <location>
        <begin position="67"/>
        <end position="84"/>
    </location>
</feature>
<feature type="sequence conflict" description="In Ref. 2; ABU94955." evidence="5" ref="2">
    <original>TV</original>
    <variation>QL</variation>
    <location>
        <begin position="37"/>
        <end position="38"/>
    </location>
</feature>
<protein>
    <recommendedName>
        <fullName evidence="6">Potassium channel toxin Ttr-beta-KTx</fullName>
        <shortName evidence="4">TtrbetaKTx</shortName>
    </recommendedName>
</protein>
<evidence type="ECO:0000250" key="1">
    <source>
        <dbReference type="UniProtKB" id="P69940"/>
    </source>
</evidence>
<evidence type="ECO:0000255" key="2"/>
<evidence type="ECO:0000255" key="3">
    <source>
        <dbReference type="PROSITE-ProRule" id="PRU01209"/>
    </source>
</evidence>
<evidence type="ECO:0000303" key="4">
    <source>
    </source>
</evidence>
<evidence type="ECO:0000305" key="5"/>
<evidence type="ECO:0000305" key="6">
    <source>
    </source>
</evidence>
<accession>Q0GY46</accession>
<accession>A8SDT0</accession>
<sequence>MERKWALLLFLGMVTLVSCGLREKHVQKLVALIPNDTVRSILKAVVHKAAKTQFGCPAYEGYCNNHCQDIKRKDGECHGFKCKCAKD</sequence>